<keyword id="KW-0238">DNA-binding</keyword>
<keyword id="KW-0678">Repressor</keyword>
<keyword id="KW-0346">Stress response</keyword>
<keyword id="KW-0804">Transcription</keyword>
<keyword id="KW-0805">Transcription regulation</keyword>
<protein>
    <recommendedName>
        <fullName>Transcriptional regulator CtsR</fullName>
    </recommendedName>
</protein>
<comment type="function">
    <text evidence="1">Negative regulator of clpC, clpB and clpP transcription by binding directly and specifically to their promoter region.</text>
</comment>
<comment type="similarity">
    <text evidence="2">Belongs to the CtsR family.</text>
</comment>
<feature type="chain" id="PRO_0000274135" description="Transcriptional regulator CtsR">
    <location>
        <begin position="1"/>
        <end position="153"/>
    </location>
</feature>
<proteinExistence type="inferred from homology"/>
<accession>Q6GBW6</accession>
<sequence>MHNMSDIIEQYIKRLFEESNEDVVEIQRANIAQRFDCVPSQLNYVIKTRFTNEHGYEIESKRGGGGYIRITKIENKDATGYINHLLQLIGPSISQQQAYYIIDGLLDKMLINEREAKMIQAVIDRETLSMDMVSRDIIRANILKRLLPVINYY</sequence>
<gene>
    <name type="primary">ctsR</name>
    <name type="ordered locus">SAS0479</name>
</gene>
<evidence type="ECO:0000250" key="1"/>
<evidence type="ECO:0000305" key="2"/>
<reference key="1">
    <citation type="journal article" date="2004" name="Proc. Natl. Acad. Sci. U.S.A.">
        <title>Complete genomes of two clinical Staphylococcus aureus strains: evidence for the rapid evolution of virulence and drug resistance.</title>
        <authorList>
            <person name="Holden M.T.G."/>
            <person name="Feil E.J."/>
            <person name="Lindsay J.A."/>
            <person name="Peacock S.J."/>
            <person name="Day N.P.J."/>
            <person name="Enright M.C."/>
            <person name="Foster T.J."/>
            <person name="Moore C.E."/>
            <person name="Hurst L."/>
            <person name="Atkin R."/>
            <person name="Barron A."/>
            <person name="Bason N."/>
            <person name="Bentley S.D."/>
            <person name="Chillingworth C."/>
            <person name="Chillingworth T."/>
            <person name="Churcher C."/>
            <person name="Clark L."/>
            <person name="Corton C."/>
            <person name="Cronin A."/>
            <person name="Doggett J."/>
            <person name="Dowd L."/>
            <person name="Feltwell T."/>
            <person name="Hance Z."/>
            <person name="Harris B."/>
            <person name="Hauser H."/>
            <person name="Holroyd S."/>
            <person name="Jagels K."/>
            <person name="James K.D."/>
            <person name="Lennard N."/>
            <person name="Line A."/>
            <person name="Mayes R."/>
            <person name="Moule S."/>
            <person name="Mungall K."/>
            <person name="Ormond D."/>
            <person name="Quail M.A."/>
            <person name="Rabbinowitsch E."/>
            <person name="Rutherford K.M."/>
            <person name="Sanders M."/>
            <person name="Sharp S."/>
            <person name="Simmonds M."/>
            <person name="Stevens K."/>
            <person name="Whitehead S."/>
            <person name="Barrell B.G."/>
            <person name="Spratt B.G."/>
            <person name="Parkhill J."/>
        </authorList>
    </citation>
    <scope>NUCLEOTIDE SEQUENCE [LARGE SCALE GENOMIC DNA]</scope>
    <source>
        <strain>MSSA476</strain>
    </source>
</reference>
<name>CTSR_STAAS</name>
<organism>
    <name type="scientific">Staphylococcus aureus (strain MSSA476)</name>
    <dbReference type="NCBI Taxonomy" id="282459"/>
    <lineage>
        <taxon>Bacteria</taxon>
        <taxon>Bacillati</taxon>
        <taxon>Bacillota</taxon>
        <taxon>Bacilli</taxon>
        <taxon>Bacillales</taxon>
        <taxon>Staphylococcaceae</taxon>
        <taxon>Staphylococcus</taxon>
    </lineage>
</organism>
<dbReference type="EMBL" id="BX571857">
    <property type="protein sequence ID" value="CAG42254.1"/>
    <property type="molecule type" value="Genomic_DNA"/>
</dbReference>
<dbReference type="RefSeq" id="WP_000551762.1">
    <property type="nucleotide sequence ID" value="NC_002953.3"/>
</dbReference>
<dbReference type="SMR" id="Q6GBW6"/>
<dbReference type="KEGG" id="sas:SAS0479"/>
<dbReference type="HOGENOM" id="CLU_118139_0_0_9"/>
<dbReference type="GO" id="GO:0003677">
    <property type="term" value="F:DNA binding"/>
    <property type="evidence" value="ECO:0007669"/>
    <property type="project" value="UniProtKB-KW"/>
</dbReference>
<dbReference type="GO" id="GO:0006355">
    <property type="term" value="P:regulation of DNA-templated transcription"/>
    <property type="evidence" value="ECO:0007669"/>
    <property type="project" value="InterPro"/>
</dbReference>
<dbReference type="FunFam" id="1.10.1200.150:FF:000002">
    <property type="entry name" value="Transcriptional regulator CtsR"/>
    <property type="match status" value="1"/>
</dbReference>
<dbReference type="FunFam" id="3.30.56.130:FF:000001">
    <property type="entry name" value="Transcriptional regulator CtsR"/>
    <property type="match status" value="1"/>
</dbReference>
<dbReference type="Gene3D" id="1.10.1200.150">
    <property type="entry name" value="Transcriptional regulator CtsR, C-terminal domain"/>
    <property type="match status" value="1"/>
</dbReference>
<dbReference type="Gene3D" id="3.30.56.130">
    <property type="entry name" value="Transcriptional regulator CtsR, winged HTH domain"/>
    <property type="match status" value="1"/>
</dbReference>
<dbReference type="InterPro" id="IPR008463">
    <property type="entry name" value="CtsR"/>
</dbReference>
<dbReference type="InterPro" id="IPR041473">
    <property type="entry name" value="CtsR_C"/>
</dbReference>
<dbReference type="InterPro" id="IPR041908">
    <property type="entry name" value="CtsR_C_sf"/>
</dbReference>
<dbReference type="InterPro" id="IPR040465">
    <property type="entry name" value="CtsR_N"/>
</dbReference>
<dbReference type="InterPro" id="IPR041902">
    <property type="entry name" value="CtsR_N_sf"/>
</dbReference>
<dbReference type="Pfam" id="PF05848">
    <property type="entry name" value="CtsR"/>
    <property type="match status" value="1"/>
</dbReference>
<dbReference type="Pfam" id="PF17727">
    <property type="entry name" value="CtsR_C"/>
    <property type="match status" value="1"/>
</dbReference>
<dbReference type="PIRSF" id="PIRSF010607">
    <property type="entry name" value="Txn_repr_CtsR"/>
    <property type="match status" value="1"/>
</dbReference>